<name>KUP1_SINMW</name>
<proteinExistence type="inferred from homology"/>
<comment type="function">
    <text evidence="1">Transport of potassium into the cell. Likely operates as a K(+):H(+) symporter.</text>
</comment>
<comment type="catalytic activity">
    <reaction evidence="1">
        <text>K(+)(in) + H(+)(in) = K(+)(out) + H(+)(out)</text>
        <dbReference type="Rhea" id="RHEA:28490"/>
        <dbReference type="ChEBI" id="CHEBI:15378"/>
        <dbReference type="ChEBI" id="CHEBI:29103"/>
    </reaction>
    <physiologicalReaction direction="right-to-left" evidence="1">
        <dbReference type="Rhea" id="RHEA:28492"/>
    </physiologicalReaction>
</comment>
<comment type="subcellular location">
    <subcellularLocation>
        <location evidence="1">Cell inner membrane</location>
        <topology evidence="1">Multi-pass membrane protein</topology>
    </subcellularLocation>
</comment>
<comment type="similarity">
    <text evidence="1">Belongs to the HAK/KUP transporter (TC 2.A.72) family.</text>
</comment>
<sequence>MSQLSAPGAENTRRLLAMALGSVGVVYGDIGTSPLYAFREALRPVSHDGVTDVEIVGLISLMIWALTIIVTIKYVLFLLRADNQGEGGTLSLLALLMKTANGHTAILFFMGIAGAALFIGDAMITPALSVLSAVEGLKLVTPALSDYVVPIAVVILLFLFAVQSKGTAAVSKFFGPITLVWFLVMGAVGFMHIADDLSIFRAFNPYYAVAFLFNEGYVGIVVLGAVFLTVTGAEALYADLGHFGRRPIQWAWFTVVFPALTLNYLGQGAFVLKNPEAMSDPFFLMFPKWALLPAVILATAATIIASQAVITGAFSLTRQAIHLGFLPRMAIFHTSETHTGQIYLPNVNTLLMFGVMALVFIFGSSESLATAYGISVTGAMVVTTVLAFEFLRMRWNWPAWWAAGVLLPLFALELVFLGANMLKIHDGGYVPILIAATFIVIMWTWKRGTAILHTKTRHIDIPLERFIKSIERQSEHAPVSVPGTAIFLTSDPESTPAALLHNIKHNHVLHQQNFILTIRTANTPKVPREERVSARRLSERFTLMEVRFGFMETQNVSQALGLFRKSGLKFDIMSTSFYLGRRKLVPDAQSGMPHWQDRLFIALANAAIDPSDYFRLPTNRVVELGSHVII</sequence>
<reference key="1">
    <citation type="submission" date="2007-06" db="EMBL/GenBank/DDBJ databases">
        <title>Complete sequence of Sinorhizobium medicae WSM419 chromosome.</title>
        <authorList>
            <consortium name="US DOE Joint Genome Institute"/>
            <person name="Copeland A."/>
            <person name="Lucas S."/>
            <person name="Lapidus A."/>
            <person name="Barry K."/>
            <person name="Glavina del Rio T."/>
            <person name="Dalin E."/>
            <person name="Tice H."/>
            <person name="Pitluck S."/>
            <person name="Chain P."/>
            <person name="Malfatti S."/>
            <person name="Shin M."/>
            <person name="Vergez L."/>
            <person name="Schmutz J."/>
            <person name="Larimer F."/>
            <person name="Land M."/>
            <person name="Hauser L."/>
            <person name="Kyrpides N."/>
            <person name="Mikhailova N."/>
            <person name="Reeve W.G."/>
            <person name="Richardson P."/>
        </authorList>
    </citation>
    <scope>NUCLEOTIDE SEQUENCE [LARGE SCALE GENOMIC DNA]</scope>
    <source>
        <strain>WSM419</strain>
    </source>
</reference>
<evidence type="ECO:0000255" key="1">
    <source>
        <dbReference type="HAMAP-Rule" id="MF_01522"/>
    </source>
</evidence>
<gene>
    <name evidence="1" type="primary">kup1</name>
    <name type="ordered locus">Smed_0444</name>
</gene>
<dbReference type="EMBL" id="CP000738">
    <property type="protein sequence ID" value="ABR59301.1"/>
    <property type="molecule type" value="Genomic_DNA"/>
</dbReference>
<dbReference type="RefSeq" id="WP_011974648.1">
    <property type="nucleotide sequence ID" value="NC_009636.1"/>
</dbReference>
<dbReference type="RefSeq" id="YP_001326136.1">
    <property type="nucleotide sequence ID" value="NC_009636.1"/>
</dbReference>
<dbReference type="STRING" id="366394.Smed_0444"/>
<dbReference type="KEGG" id="smd:Smed_0444"/>
<dbReference type="PATRIC" id="fig|366394.8.peg.3528"/>
<dbReference type="eggNOG" id="COG3158">
    <property type="taxonomic scope" value="Bacteria"/>
</dbReference>
<dbReference type="HOGENOM" id="CLU_008142_4_2_5"/>
<dbReference type="OrthoDB" id="9805577at2"/>
<dbReference type="Proteomes" id="UP000001108">
    <property type="component" value="Chromosome"/>
</dbReference>
<dbReference type="GO" id="GO:0005886">
    <property type="term" value="C:plasma membrane"/>
    <property type="evidence" value="ECO:0007669"/>
    <property type="project" value="UniProtKB-SubCell"/>
</dbReference>
<dbReference type="GO" id="GO:0015079">
    <property type="term" value="F:potassium ion transmembrane transporter activity"/>
    <property type="evidence" value="ECO:0007669"/>
    <property type="project" value="UniProtKB-UniRule"/>
</dbReference>
<dbReference type="GO" id="GO:0015293">
    <property type="term" value="F:symporter activity"/>
    <property type="evidence" value="ECO:0007669"/>
    <property type="project" value="UniProtKB-UniRule"/>
</dbReference>
<dbReference type="HAMAP" id="MF_01522">
    <property type="entry name" value="Kup"/>
    <property type="match status" value="1"/>
</dbReference>
<dbReference type="InterPro" id="IPR003855">
    <property type="entry name" value="K+_transporter"/>
</dbReference>
<dbReference type="InterPro" id="IPR053952">
    <property type="entry name" value="K_trans_C"/>
</dbReference>
<dbReference type="InterPro" id="IPR053951">
    <property type="entry name" value="K_trans_N"/>
</dbReference>
<dbReference type="InterPro" id="IPR023051">
    <property type="entry name" value="Kup"/>
</dbReference>
<dbReference type="PANTHER" id="PTHR30540:SF79">
    <property type="entry name" value="LOW AFFINITY POTASSIUM TRANSPORT SYSTEM PROTEIN KUP"/>
    <property type="match status" value="1"/>
</dbReference>
<dbReference type="PANTHER" id="PTHR30540">
    <property type="entry name" value="OSMOTIC STRESS POTASSIUM TRANSPORTER"/>
    <property type="match status" value="1"/>
</dbReference>
<dbReference type="Pfam" id="PF02705">
    <property type="entry name" value="K_trans"/>
    <property type="match status" value="1"/>
</dbReference>
<dbReference type="Pfam" id="PF22776">
    <property type="entry name" value="K_trans_C"/>
    <property type="match status" value="1"/>
</dbReference>
<protein>
    <recommendedName>
        <fullName evidence="1">Probable potassium transport system protein Kup 1</fullName>
    </recommendedName>
</protein>
<keyword id="KW-0997">Cell inner membrane</keyword>
<keyword id="KW-1003">Cell membrane</keyword>
<keyword id="KW-0406">Ion transport</keyword>
<keyword id="KW-0472">Membrane</keyword>
<keyword id="KW-0630">Potassium</keyword>
<keyword id="KW-0633">Potassium transport</keyword>
<keyword id="KW-0769">Symport</keyword>
<keyword id="KW-0812">Transmembrane</keyword>
<keyword id="KW-1133">Transmembrane helix</keyword>
<keyword id="KW-0813">Transport</keyword>
<feature type="chain" id="PRO_0000315990" description="Probable potassium transport system protein Kup 1">
    <location>
        <begin position="1"/>
        <end position="630"/>
    </location>
</feature>
<feature type="transmembrane region" description="Helical" evidence="1">
    <location>
        <begin position="15"/>
        <end position="35"/>
    </location>
</feature>
<feature type="transmembrane region" description="Helical" evidence="1">
    <location>
        <begin position="58"/>
        <end position="78"/>
    </location>
</feature>
<feature type="transmembrane region" description="Helical" evidence="1">
    <location>
        <begin position="104"/>
        <end position="124"/>
    </location>
</feature>
<feature type="transmembrane region" description="Helical" evidence="1">
    <location>
        <begin position="142"/>
        <end position="162"/>
    </location>
</feature>
<feature type="transmembrane region" description="Helical" evidence="1">
    <location>
        <begin position="173"/>
        <end position="193"/>
    </location>
</feature>
<feature type="transmembrane region" description="Helical" evidence="1">
    <location>
        <begin position="208"/>
        <end position="228"/>
    </location>
</feature>
<feature type="transmembrane region" description="Helical" evidence="1">
    <location>
        <begin position="252"/>
        <end position="272"/>
    </location>
</feature>
<feature type="transmembrane region" description="Helical" evidence="1">
    <location>
        <begin position="290"/>
        <end position="310"/>
    </location>
</feature>
<feature type="transmembrane region" description="Helical" evidence="1">
    <location>
        <begin position="342"/>
        <end position="362"/>
    </location>
</feature>
<feature type="transmembrane region" description="Helical" evidence="1">
    <location>
        <begin position="368"/>
        <end position="388"/>
    </location>
</feature>
<feature type="transmembrane region" description="Helical" evidence="1">
    <location>
        <begin position="399"/>
        <end position="419"/>
    </location>
</feature>
<feature type="transmembrane region" description="Helical" evidence="1">
    <location>
        <begin position="424"/>
        <end position="444"/>
    </location>
</feature>
<organism>
    <name type="scientific">Sinorhizobium medicae (strain WSM419)</name>
    <name type="common">Ensifer medicae</name>
    <dbReference type="NCBI Taxonomy" id="366394"/>
    <lineage>
        <taxon>Bacteria</taxon>
        <taxon>Pseudomonadati</taxon>
        <taxon>Pseudomonadota</taxon>
        <taxon>Alphaproteobacteria</taxon>
        <taxon>Hyphomicrobiales</taxon>
        <taxon>Rhizobiaceae</taxon>
        <taxon>Sinorhizobium/Ensifer group</taxon>
        <taxon>Sinorhizobium</taxon>
    </lineage>
</organism>
<accession>A6U6M1</accession>